<keyword id="KW-0963">Cytoplasm</keyword>
<keyword id="KW-0819">tRNA processing</keyword>
<accession>Q0SZX3</accession>
<protein>
    <recommendedName>
        <fullName evidence="1">Protein TusC</fullName>
    </recommendedName>
    <alternativeName>
        <fullName evidence="1">tRNA 2-thiouridine synthesizing protein C</fullName>
    </alternativeName>
</protein>
<feature type="chain" id="PRO_1000013245" description="Protein TusC">
    <location>
        <begin position="1"/>
        <end position="119"/>
    </location>
</feature>
<sequence>MKRIAFVFSTAPHGTAAGREGLDALLATSALTDDLAVFFIADGVFQLLSGQKPDAVLARDYIATFKLLSLYDIEQCWVCAASLRERGLDPQTPFVVEATPLEADALRRELANYDVILRF</sequence>
<dbReference type="EMBL" id="CP000266">
    <property type="protein sequence ID" value="ABF05392.1"/>
    <property type="molecule type" value="Genomic_DNA"/>
</dbReference>
<dbReference type="RefSeq" id="WP_000820723.1">
    <property type="nucleotide sequence ID" value="NC_008258.1"/>
</dbReference>
<dbReference type="SMR" id="Q0SZX3"/>
<dbReference type="KEGG" id="sfv:SFV_3349"/>
<dbReference type="HOGENOM" id="CLU_155943_1_0_6"/>
<dbReference type="Proteomes" id="UP000000659">
    <property type="component" value="Chromosome"/>
</dbReference>
<dbReference type="GO" id="GO:0005737">
    <property type="term" value="C:cytoplasm"/>
    <property type="evidence" value="ECO:0007669"/>
    <property type="project" value="UniProtKB-SubCell"/>
</dbReference>
<dbReference type="GO" id="GO:0008033">
    <property type="term" value="P:tRNA processing"/>
    <property type="evidence" value="ECO:0007669"/>
    <property type="project" value="UniProtKB-UniRule"/>
</dbReference>
<dbReference type="FunFam" id="3.40.1260.10:FF:000004">
    <property type="entry name" value="Sulfurtransferase TusC"/>
    <property type="match status" value="1"/>
</dbReference>
<dbReference type="Gene3D" id="3.40.1260.10">
    <property type="entry name" value="DsrEFH-like"/>
    <property type="match status" value="1"/>
</dbReference>
<dbReference type="HAMAP" id="MF_00389">
    <property type="entry name" value="Thiourid_synth_C"/>
    <property type="match status" value="1"/>
</dbReference>
<dbReference type="InterPro" id="IPR027396">
    <property type="entry name" value="DsrEFH-like"/>
</dbReference>
<dbReference type="InterPro" id="IPR003787">
    <property type="entry name" value="Sulphur_relay_DsrE/F-like"/>
</dbReference>
<dbReference type="InterPro" id="IPR037450">
    <property type="entry name" value="Sulphur_relay_TusC"/>
</dbReference>
<dbReference type="InterPro" id="IPR017462">
    <property type="entry name" value="Sulphur_relay_TusC/DsrF"/>
</dbReference>
<dbReference type="NCBIfam" id="NF001238">
    <property type="entry name" value="PRK00211.1"/>
    <property type="match status" value="1"/>
</dbReference>
<dbReference type="NCBIfam" id="TIGR03010">
    <property type="entry name" value="sulf_tusC_dsrF"/>
    <property type="match status" value="1"/>
</dbReference>
<dbReference type="PANTHER" id="PTHR38780">
    <property type="entry name" value="PROTEIN TUSC"/>
    <property type="match status" value="1"/>
</dbReference>
<dbReference type="PANTHER" id="PTHR38780:SF1">
    <property type="entry name" value="PROTEIN TUSC"/>
    <property type="match status" value="1"/>
</dbReference>
<dbReference type="Pfam" id="PF02635">
    <property type="entry name" value="DsrE"/>
    <property type="match status" value="1"/>
</dbReference>
<dbReference type="SUPFAM" id="SSF75169">
    <property type="entry name" value="DsrEFH-like"/>
    <property type="match status" value="1"/>
</dbReference>
<proteinExistence type="inferred from homology"/>
<reference key="1">
    <citation type="journal article" date="2006" name="BMC Genomics">
        <title>Complete genome sequence of Shigella flexneri 5b and comparison with Shigella flexneri 2a.</title>
        <authorList>
            <person name="Nie H."/>
            <person name="Yang F."/>
            <person name="Zhang X."/>
            <person name="Yang J."/>
            <person name="Chen L."/>
            <person name="Wang J."/>
            <person name="Xiong Z."/>
            <person name="Peng J."/>
            <person name="Sun L."/>
            <person name="Dong J."/>
            <person name="Xue Y."/>
            <person name="Xu X."/>
            <person name="Chen S."/>
            <person name="Yao Z."/>
            <person name="Shen Y."/>
            <person name="Jin Q."/>
        </authorList>
    </citation>
    <scope>NUCLEOTIDE SEQUENCE [LARGE SCALE GENOMIC DNA]</scope>
    <source>
        <strain>8401</strain>
    </source>
</reference>
<comment type="function">
    <text evidence="1">Part of a sulfur-relay system required for 2-thiolation of 5-methylaminomethyl-2-thiouridine (mnm(5)s(2)U) at tRNA wobble positions.</text>
</comment>
<comment type="subunit">
    <text evidence="1">Heterohexamer, formed by a dimer of trimers. The hexameric TusBCD complex contains 2 copies each of TusB, TusC and TusD. The TusBCD complex interacts with TusE.</text>
</comment>
<comment type="subcellular location">
    <subcellularLocation>
        <location evidence="1">Cytoplasm</location>
    </subcellularLocation>
</comment>
<comment type="similarity">
    <text evidence="1">Belongs to the DsrF/TusC family.</text>
</comment>
<gene>
    <name evidence="1" type="primary">tusC</name>
    <name type="ordered locus">SFV_3349</name>
</gene>
<name>TUSC_SHIF8</name>
<organism>
    <name type="scientific">Shigella flexneri serotype 5b (strain 8401)</name>
    <dbReference type="NCBI Taxonomy" id="373384"/>
    <lineage>
        <taxon>Bacteria</taxon>
        <taxon>Pseudomonadati</taxon>
        <taxon>Pseudomonadota</taxon>
        <taxon>Gammaproteobacteria</taxon>
        <taxon>Enterobacterales</taxon>
        <taxon>Enterobacteriaceae</taxon>
        <taxon>Shigella</taxon>
    </lineage>
</organism>
<evidence type="ECO:0000255" key="1">
    <source>
        <dbReference type="HAMAP-Rule" id="MF_00389"/>
    </source>
</evidence>